<evidence type="ECO:0000305" key="1"/>
<organism>
    <name type="scientific">Pisum sativum</name>
    <name type="common">Garden pea</name>
    <name type="synonym">Lathyrus oleraceus</name>
    <dbReference type="NCBI Taxonomy" id="3888"/>
    <lineage>
        <taxon>Eukaryota</taxon>
        <taxon>Viridiplantae</taxon>
        <taxon>Streptophyta</taxon>
        <taxon>Embryophyta</taxon>
        <taxon>Tracheophyta</taxon>
        <taxon>Spermatophyta</taxon>
        <taxon>Magnoliopsida</taxon>
        <taxon>eudicotyledons</taxon>
        <taxon>Gunneridae</taxon>
        <taxon>Pentapetalae</taxon>
        <taxon>rosids</taxon>
        <taxon>fabids</taxon>
        <taxon>Fabales</taxon>
        <taxon>Fabaceae</taxon>
        <taxon>Papilionoideae</taxon>
        <taxon>50 kb inversion clade</taxon>
        <taxon>NPAAA clade</taxon>
        <taxon>Hologalegina</taxon>
        <taxon>IRL clade</taxon>
        <taxon>Fabeae</taxon>
        <taxon>Pisum</taxon>
    </lineage>
</organism>
<dbReference type="PIR" id="S06131">
    <property type="entry name" value="S06131"/>
</dbReference>
<dbReference type="GO" id="GO:0005743">
    <property type="term" value="C:mitochondrial inner membrane"/>
    <property type="evidence" value="ECO:0007669"/>
    <property type="project" value="UniProtKB-SubCell"/>
</dbReference>
<dbReference type="GO" id="GO:0006754">
    <property type="term" value="P:ATP biosynthetic process"/>
    <property type="evidence" value="ECO:0007669"/>
    <property type="project" value="UniProtKB-KW"/>
</dbReference>
<dbReference type="GO" id="GO:1902600">
    <property type="term" value="P:proton transmembrane transport"/>
    <property type="evidence" value="ECO:0007669"/>
    <property type="project" value="UniProtKB-KW"/>
</dbReference>
<accession>P17604</accession>
<feature type="chain" id="PRO_0000193506" description="ATP synthase subunit O, mitochondrial">
    <location>
        <begin position="1"/>
        <end position="38" status="greater than"/>
    </location>
</feature>
<feature type="non-terminal residue">
    <location>
        <position position="38"/>
    </location>
</feature>
<sequence length="38" mass="3987">QQVPGZKETKIKVPIAMFGGSGNYAXALYIAAVKXNAV</sequence>
<reference key="1">
    <citation type="journal article" date="1989" name="Biochem. J.">
        <title>Plant mitochondrial F1-ATPase. The presence of oligomycin-sensitivity-conferring protein (OSCP).</title>
        <authorList>
            <person name="Horak A."/>
            <person name="Horak H."/>
            <person name="Dunbar B."/>
            <person name="Fothergill J.E."/>
            <person name="Wilson S.B."/>
        </authorList>
    </citation>
    <scope>PROTEIN SEQUENCE</scope>
</reference>
<comment type="function">
    <text>Mitochondrial membrane ATP synthase (F(1)F(0) ATP synthase or Complex V) produces ATP from ADP in the presence of a proton gradient across the membrane which is generated by electron transport complexes of the respiratory chain. F-type ATPases consist of two structural domains, F(1) - containing the extramembraneous catalytic core and F(0) - containing the membrane proton channel, linked together by a central stalk and a peripheral stalk. During catalysis, ATP synthesis in the catalytic domain of F(1) is coupled via a rotary mechanism of the central stalk subunits to proton translocation. Part of the complex F(0) domain and the peripheric stalk, which acts as a stator to hold the catalytic alpha(3)beta(3) subcomplex and subunit a/ATP6 static relative to the rotary elements.</text>
</comment>
<comment type="subunit">
    <text>F-type ATPases have 2 components, CF(1) - the catalytic core - and CF(0) - the membrane proton channel. CF(1) has five subunits: alpha(3), beta(3), gamma(1), delta(1), epsilon(1). CF(0) has three main subunits: a, b and c.</text>
</comment>
<comment type="subcellular location">
    <subcellularLocation>
        <location>Mitochondrion</location>
    </subcellularLocation>
    <subcellularLocation>
        <location>Mitochondrion inner membrane</location>
    </subcellularLocation>
</comment>
<comment type="similarity">
    <text evidence="1">Belongs to the ATPase delta chain family.</text>
</comment>
<keyword id="KW-0066">ATP synthesis</keyword>
<keyword id="KW-0903">Direct protein sequencing</keyword>
<keyword id="KW-0375">Hydrogen ion transport</keyword>
<keyword id="KW-0406">Ion transport</keyword>
<keyword id="KW-0472">Membrane</keyword>
<keyword id="KW-0496">Mitochondrion</keyword>
<keyword id="KW-0999">Mitochondrion inner membrane</keyword>
<keyword id="KW-0813">Transport</keyword>
<proteinExistence type="evidence at protein level"/>
<name>ATPO_PEA</name>
<protein>
    <recommendedName>
        <fullName>ATP synthase subunit O, mitochondrial</fullName>
    </recommendedName>
    <alternativeName>
        <fullName>Oligomycin sensitivity conferral protein</fullName>
        <shortName>OSCP</shortName>
    </alternativeName>
</protein>